<accession>C1F613</accession>
<comment type="subunit">
    <text evidence="1">Part of the 50S ribosomal subunit. Contacts protein L32.</text>
</comment>
<comment type="similarity">
    <text evidence="1">Belongs to the bacterial ribosomal protein bL17 family.</text>
</comment>
<organism>
    <name type="scientific">Acidobacterium capsulatum (strain ATCC 51196 / DSM 11244 / BCRC 80197 / JCM 7670 / NBRC 15755 / NCIMB 13165 / 161)</name>
    <dbReference type="NCBI Taxonomy" id="240015"/>
    <lineage>
        <taxon>Bacteria</taxon>
        <taxon>Pseudomonadati</taxon>
        <taxon>Acidobacteriota</taxon>
        <taxon>Terriglobia</taxon>
        <taxon>Terriglobales</taxon>
        <taxon>Acidobacteriaceae</taxon>
        <taxon>Acidobacterium</taxon>
    </lineage>
</organism>
<proteinExistence type="inferred from homology"/>
<sequence>MRHRNAGYKLGRNTSHRRALLRNLVTSILMEDRVETTITKAKAARPHVEKLITLGKKGDVHSRRQALAYLQTREAVTRLFDTVAPRYGDRNGGYLRIVRSGFQRGDGAEKAFIELLGAEQELDEKRQKRAEARAKRREEMQKAMAEQQQAEGGEPEGGNE</sequence>
<evidence type="ECO:0000255" key="1">
    <source>
        <dbReference type="HAMAP-Rule" id="MF_01368"/>
    </source>
</evidence>
<evidence type="ECO:0000256" key="2">
    <source>
        <dbReference type="SAM" id="MobiDB-lite"/>
    </source>
</evidence>
<evidence type="ECO:0000305" key="3"/>
<gene>
    <name evidence="1" type="primary">rplQ</name>
    <name type="ordered locus">ACP_1422</name>
</gene>
<feature type="chain" id="PRO_1000183989" description="Large ribosomal subunit protein bL17">
    <location>
        <begin position="1"/>
        <end position="160"/>
    </location>
</feature>
<feature type="region of interest" description="Disordered" evidence="2">
    <location>
        <begin position="123"/>
        <end position="160"/>
    </location>
</feature>
<feature type="compositionally biased region" description="Basic and acidic residues" evidence="2">
    <location>
        <begin position="123"/>
        <end position="141"/>
    </location>
</feature>
<feature type="compositionally biased region" description="Low complexity" evidence="2">
    <location>
        <begin position="142"/>
        <end position="152"/>
    </location>
</feature>
<name>RL17_ACIC5</name>
<protein>
    <recommendedName>
        <fullName evidence="1">Large ribosomal subunit protein bL17</fullName>
    </recommendedName>
    <alternativeName>
        <fullName evidence="3">50S ribosomal protein L17</fullName>
    </alternativeName>
</protein>
<dbReference type="EMBL" id="CP001472">
    <property type="protein sequence ID" value="ACO32366.1"/>
    <property type="molecule type" value="Genomic_DNA"/>
</dbReference>
<dbReference type="RefSeq" id="WP_015896555.1">
    <property type="nucleotide sequence ID" value="NC_012483.1"/>
</dbReference>
<dbReference type="SMR" id="C1F613"/>
<dbReference type="FunCoup" id="C1F613">
    <property type="interactions" value="626"/>
</dbReference>
<dbReference type="STRING" id="240015.ACP_1422"/>
<dbReference type="KEGG" id="aca:ACP_1422"/>
<dbReference type="eggNOG" id="COG0203">
    <property type="taxonomic scope" value="Bacteria"/>
</dbReference>
<dbReference type="HOGENOM" id="CLU_074407_0_1_0"/>
<dbReference type="InParanoid" id="C1F613"/>
<dbReference type="OrthoDB" id="9809073at2"/>
<dbReference type="Proteomes" id="UP000002207">
    <property type="component" value="Chromosome"/>
</dbReference>
<dbReference type="GO" id="GO:0022625">
    <property type="term" value="C:cytosolic large ribosomal subunit"/>
    <property type="evidence" value="ECO:0007669"/>
    <property type="project" value="TreeGrafter"/>
</dbReference>
<dbReference type="GO" id="GO:0003735">
    <property type="term" value="F:structural constituent of ribosome"/>
    <property type="evidence" value="ECO:0007669"/>
    <property type="project" value="InterPro"/>
</dbReference>
<dbReference type="GO" id="GO:0006412">
    <property type="term" value="P:translation"/>
    <property type="evidence" value="ECO:0007669"/>
    <property type="project" value="UniProtKB-UniRule"/>
</dbReference>
<dbReference type="Gene3D" id="3.90.1030.10">
    <property type="entry name" value="Ribosomal protein L17"/>
    <property type="match status" value="1"/>
</dbReference>
<dbReference type="HAMAP" id="MF_01368">
    <property type="entry name" value="Ribosomal_bL17"/>
    <property type="match status" value="1"/>
</dbReference>
<dbReference type="InterPro" id="IPR000456">
    <property type="entry name" value="Ribosomal_bL17"/>
</dbReference>
<dbReference type="InterPro" id="IPR036373">
    <property type="entry name" value="Ribosomal_bL17_sf"/>
</dbReference>
<dbReference type="NCBIfam" id="TIGR00059">
    <property type="entry name" value="L17"/>
    <property type="match status" value="1"/>
</dbReference>
<dbReference type="PANTHER" id="PTHR14413:SF16">
    <property type="entry name" value="LARGE RIBOSOMAL SUBUNIT PROTEIN BL17M"/>
    <property type="match status" value="1"/>
</dbReference>
<dbReference type="PANTHER" id="PTHR14413">
    <property type="entry name" value="RIBOSOMAL PROTEIN L17"/>
    <property type="match status" value="1"/>
</dbReference>
<dbReference type="Pfam" id="PF01196">
    <property type="entry name" value="Ribosomal_L17"/>
    <property type="match status" value="1"/>
</dbReference>
<dbReference type="SUPFAM" id="SSF64263">
    <property type="entry name" value="Prokaryotic ribosomal protein L17"/>
    <property type="match status" value="1"/>
</dbReference>
<keyword id="KW-1185">Reference proteome</keyword>
<keyword id="KW-0687">Ribonucleoprotein</keyword>
<keyword id="KW-0689">Ribosomal protein</keyword>
<reference key="1">
    <citation type="journal article" date="2009" name="Appl. Environ. Microbiol.">
        <title>Three genomes from the phylum Acidobacteria provide insight into the lifestyles of these microorganisms in soils.</title>
        <authorList>
            <person name="Ward N.L."/>
            <person name="Challacombe J.F."/>
            <person name="Janssen P.H."/>
            <person name="Henrissat B."/>
            <person name="Coutinho P.M."/>
            <person name="Wu M."/>
            <person name="Xie G."/>
            <person name="Haft D.H."/>
            <person name="Sait M."/>
            <person name="Badger J."/>
            <person name="Barabote R.D."/>
            <person name="Bradley B."/>
            <person name="Brettin T.S."/>
            <person name="Brinkac L.M."/>
            <person name="Bruce D."/>
            <person name="Creasy T."/>
            <person name="Daugherty S.C."/>
            <person name="Davidsen T.M."/>
            <person name="DeBoy R.T."/>
            <person name="Detter J.C."/>
            <person name="Dodson R.J."/>
            <person name="Durkin A.S."/>
            <person name="Ganapathy A."/>
            <person name="Gwinn-Giglio M."/>
            <person name="Han C.S."/>
            <person name="Khouri H."/>
            <person name="Kiss H."/>
            <person name="Kothari S.P."/>
            <person name="Madupu R."/>
            <person name="Nelson K.E."/>
            <person name="Nelson W.C."/>
            <person name="Paulsen I."/>
            <person name="Penn K."/>
            <person name="Ren Q."/>
            <person name="Rosovitz M.J."/>
            <person name="Selengut J.D."/>
            <person name="Shrivastava S."/>
            <person name="Sullivan S.A."/>
            <person name="Tapia R."/>
            <person name="Thompson L.S."/>
            <person name="Watkins K.L."/>
            <person name="Yang Q."/>
            <person name="Yu C."/>
            <person name="Zafar N."/>
            <person name="Zhou L."/>
            <person name="Kuske C.R."/>
        </authorList>
    </citation>
    <scope>NUCLEOTIDE SEQUENCE [LARGE SCALE GENOMIC DNA]</scope>
    <source>
        <strain>ATCC 51196 / DSM 11244 / BCRC 80197 / JCM 7670 / NBRC 15755 / NCIMB 13165 / 161</strain>
    </source>
</reference>